<accession>E4ZUB5</accession>
<dbReference type="EC" id="5.5.1.19" evidence="1"/>
<dbReference type="EC" id="2.5.1.32" evidence="1"/>
<dbReference type="EMBL" id="FP929126">
    <property type="protein sequence ID" value="CBX94994.1"/>
    <property type="molecule type" value="Genomic_DNA"/>
</dbReference>
<dbReference type="RefSeq" id="XP_003838473.1">
    <property type="nucleotide sequence ID" value="XM_003838425.1"/>
</dbReference>
<dbReference type="SMR" id="E4ZUB5"/>
<dbReference type="STRING" id="985895.E4ZUB5"/>
<dbReference type="EnsemblFungi" id="CBX94994">
    <property type="protein sequence ID" value="CBX94994"/>
    <property type="gene ID" value="LEMA_P114090.1"/>
</dbReference>
<dbReference type="VEuPathDB" id="FungiDB:LEMA_P114090.1"/>
<dbReference type="eggNOG" id="KOG1459">
    <property type="taxonomic scope" value="Eukaryota"/>
</dbReference>
<dbReference type="HOGENOM" id="CLU_012965_0_0_1"/>
<dbReference type="InParanoid" id="E4ZUB5"/>
<dbReference type="OMA" id="WACPFLL"/>
<dbReference type="OrthoDB" id="6600518at2759"/>
<dbReference type="UniPathway" id="UPA00799">
    <property type="reaction ID" value="UER00773"/>
</dbReference>
<dbReference type="UniPathway" id="UPA00802"/>
<dbReference type="Proteomes" id="UP000002668">
    <property type="component" value="Genome"/>
</dbReference>
<dbReference type="GO" id="GO:0016020">
    <property type="term" value="C:membrane"/>
    <property type="evidence" value="ECO:0007669"/>
    <property type="project" value="UniProtKB-SubCell"/>
</dbReference>
<dbReference type="GO" id="GO:0004311">
    <property type="term" value="F:geranylgeranyl diphosphate synthase activity"/>
    <property type="evidence" value="ECO:0007669"/>
    <property type="project" value="InterPro"/>
</dbReference>
<dbReference type="GO" id="GO:0016872">
    <property type="term" value="F:intramolecular lyase activity"/>
    <property type="evidence" value="ECO:0007669"/>
    <property type="project" value="InterPro"/>
</dbReference>
<dbReference type="GO" id="GO:0045436">
    <property type="term" value="F:lycopene beta cyclase activity"/>
    <property type="evidence" value="ECO:0007669"/>
    <property type="project" value="RHEA"/>
</dbReference>
<dbReference type="GO" id="GO:0051996">
    <property type="term" value="F:squalene synthase [NAD(P)H] activity"/>
    <property type="evidence" value="ECO:0007669"/>
    <property type="project" value="InterPro"/>
</dbReference>
<dbReference type="GO" id="GO:0016117">
    <property type="term" value="P:carotenoid biosynthetic process"/>
    <property type="evidence" value="ECO:0007669"/>
    <property type="project" value="UniProtKB-KW"/>
</dbReference>
<dbReference type="CDD" id="cd00683">
    <property type="entry name" value="Trans_IPPS_HH"/>
    <property type="match status" value="1"/>
</dbReference>
<dbReference type="Gene3D" id="1.10.600.10">
    <property type="entry name" value="Farnesyl Diphosphate Synthase"/>
    <property type="match status" value="1"/>
</dbReference>
<dbReference type="InterPro" id="IPR008949">
    <property type="entry name" value="Isoprenoid_synthase_dom_sf"/>
</dbReference>
<dbReference type="InterPro" id="IPR017825">
    <property type="entry name" value="Lycopene_cyclase_dom"/>
</dbReference>
<dbReference type="InterPro" id="IPR002060">
    <property type="entry name" value="Squ/phyt_synthse"/>
</dbReference>
<dbReference type="InterPro" id="IPR019845">
    <property type="entry name" value="Squalene/phytoene_synthase_CS"/>
</dbReference>
<dbReference type="InterPro" id="IPR044843">
    <property type="entry name" value="Trans_IPPS_bact-type"/>
</dbReference>
<dbReference type="InterPro" id="IPR033904">
    <property type="entry name" value="Trans_IPPS_HH"/>
</dbReference>
<dbReference type="NCBIfam" id="TIGR03462">
    <property type="entry name" value="CarR_dom_SF"/>
    <property type="match status" value="2"/>
</dbReference>
<dbReference type="PANTHER" id="PTHR31480">
    <property type="entry name" value="BIFUNCTIONAL LYCOPENE CYCLASE/PHYTOENE SYNTHASE"/>
    <property type="match status" value="1"/>
</dbReference>
<dbReference type="Pfam" id="PF00494">
    <property type="entry name" value="SQS_PSY"/>
    <property type="match status" value="1"/>
</dbReference>
<dbReference type="SFLD" id="SFLDS00005">
    <property type="entry name" value="Isoprenoid_Synthase_Type_I"/>
    <property type="match status" value="1"/>
</dbReference>
<dbReference type="SFLD" id="SFLDG01212">
    <property type="entry name" value="Phytoene_synthase_like"/>
    <property type="match status" value="1"/>
</dbReference>
<dbReference type="SUPFAM" id="SSF48576">
    <property type="entry name" value="Terpenoid synthases"/>
    <property type="match status" value="1"/>
</dbReference>
<dbReference type="PROSITE" id="PS01045">
    <property type="entry name" value="SQUALEN_PHYTOEN_SYN_2"/>
    <property type="match status" value="1"/>
</dbReference>
<comment type="function">
    <text evidence="1">Bifunctional enzyme that catalyzes the reactions from geranylgeranyl diphosphate to phytoene (phytoene synthase) and lycopene to beta-carotene via the intermediate gamma-carotene (lycopene cyclase).</text>
</comment>
<comment type="catalytic activity">
    <reaction evidence="1">
        <text>all-trans-lycopene = gamma-carotene</text>
        <dbReference type="Rhea" id="RHEA:32219"/>
        <dbReference type="ChEBI" id="CHEBI:15948"/>
        <dbReference type="ChEBI" id="CHEBI:27740"/>
        <dbReference type="EC" id="5.5.1.19"/>
    </reaction>
</comment>
<comment type="catalytic activity">
    <reaction evidence="1">
        <text>gamma-carotene = all-trans-beta-carotene</text>
        <dbReference type="Rhea" id="RHEA:32239"/>
        <dbReference type="ChEBI" id="CHEBI:17579"/>
        <dbReference type="ChEBI" id="CHEBI:27740"/>
        <dbReference type="EC" id="5.5.1.19"/>
    </reaction>
</comment>
<comment type="catalytic activity">
    <reaction evidence="1">
        <text>2 (2E,6E,10E)-geranylgeranyl diphosphate = 15-cis-phytoene + 2 diphosphate</text>
        <dbReference type="Rhea" id="RHEA:34475"/>
        <dbReference type="ChEBI" id="CHEBI:27787"/>
        <dbReference type="ChEBI" id="CHEBI:33019"/>
        <dbReference type="ChEBI" id="CHEBI:58756"/>
        <dbReference type="EC" id="2.5.1.32"/>
    </reaction>
</comment>
<comment type="pathway">
    <text evidence="1">Carotenoid biosynthesis; beta-carotene biosynthesis.</text>
</comment>
<comment type="pathway">
    <text evidence="1">Carotenoid biosynthesis; phytoene biosynthesis; all-trans-phytoene from geranylgeranyl diphosphate: step 1/1.</text>
</comment>
<comment type="subcellular location">
    <subcellularLocation>
        <location evidence="3">Membrane</location>
        <topology evidence="3">Multi-pass membrane protein</topology>
    </subcellularLocation>
</comment>
<comment type="similarity">
    <text evidence="3">In the N-terminal section; belongs to the lycopene beta-cyclase family.</text>
</comment>
<comment type="similarity">
    <text evidence="3">In the C-terminal section; belongs to the phytoene/squalene synthase family.</text>
</comment>
<proteinExistence type="inferred from homology"/>
<sequence length="581" mass="65807">MGFDYALVHLKYTIPPAVLLTLLYRPLLTKIDVYKVAFLVTIAVVATIPWDSYLIRNRIWSYPDHVIIGPTLFDIPLEEVFFFVVQTYNTSLLYLVLSKPTFQPVYLCTERDELHGSWRLKRLIGQAILLGAIAWGWFCVRERGLGTYTGLILIWAGPFLLLLWSLAYQFIIGLPFTNTLLPIVLPTLYLWIVDTLALRRGTWVISPGTKFGVHLWDGLEIEEALFFLLTNVLIVFGQLAFDNALAVLYAFPHLFPDPSLLPSPATLIRSLLTSCAQYDEARLTGFREAVSRLKRKSRSFYLASSTFQGPLRMDLLLLYSFCRVADDLVDNAATTEEARQWIAKLHKFLDNVYRKDVVCSSVTDQVRKEFPLDTHSALLQLPCCKLSAEPLRDLLRGFEMDLEFNSTSPIQSTEDLVLYSERVAGTVAQMCIQLIFHLYPSSLTAEKRHKVVAAGNSMGVALQYVNIARDIGVDAKIGRVYLPTDWLSEVGLNCDTVLKDPKDPRIEALRGRLLDDAFSFYEEAKLAIAQLPIEAQGPIRVAVESYMEIGRTLKQDGFIVKAGRATVPKWRRVLVAWRTLN</sequence>
<protein>
    <recommendedName>
        <fullName>Bifunctional lycopene cyclase/phytoene synthase</fullName>
    </recommendedName>
    <domain>
        <recommendedName>
            <fullName evidence="1">Lycopene beta-cyclase</fullName>
            <ecNumber evidence="1">5.5.1.19</ecNumber>
        </recommendedName>
        <alternativeName>
            <fullName evidence="1">Lycopene cyclase</fullName>
        </alternativeName>
    </domain>
    <domain>
        <recommendedName>
            <fullName evidence="1">Phytoene synthase</fullName>
            <ecNumber evidence="1">2.5.1.32</ecNumber>
        </recommendedName>
    </domain>
</protein>
<evidence type="ECO:0000250" key="1">
    <source>
        <dbReference type="UniProtKB" id="P37295"/>
    </source>
</evidence>
<evidence type="ECO:0000255" key="2"/>
<evidence type="ECO:0000305" key="3"/>
<reference key="1">
    <citation type="journal article" date="2011" name="Nat. Commun.">
        <title>Effector diversification within compartments of the Leptosphaeria maculans genome affected by Repeat-Induced Point mutations.</title>
        <authorList>
            <person name="Rouxel T."/>
            <person name="Grandaubert J."/>
            <person name="Hane J.K."/>
            <person name="Hoede C."/>
            <person name="van de Wouw A.P."/>
            <person name="Couloux A."/>
            <person name="Dominguez V."/>
            <person name="Anthouard V."/>
            <person name="Bally P."/>
            <person name="Bourras S."/>
            <person name="Cozijnsen A.J."/>
            <person name="Ciuffetti L.M."/>
            <person name="Degrave A."/>
            <person name="Dilmaghani A."/>
            <person name="Duret L."/>
            <person name="Fudal I."/>
            <person name="Goodwin S.B."/>
            <person name="Gout L."/>
            <person name="Glaser N."/>
            <person name="Linglin J."/>
            <person name="Kema G.H.J."/>
            <person name="Lapalu N."/>
            <person name="Lawrence C.B."/>
            <person name="May K."/>
            <person name="Meyer M."/>
            <person name="Ollivier B."/>
            <person name="Poulain J."/>
            <person name="Schoch C.L."/>
            <person name="Simon A."/>
            <person name="Spatafora J.W."/>
            <person name="Stachowiak A."/>
            <person name="Turgeon B.G."/>
            <person name="Tyler B.M."/>
            <person name="Vincent D."/>
            <person name="Weissenbach J."/>
            <person name="Amselem J."/>
            <person name="Quesneville H."/>
            <person name="Oliver R.P."/>
            <person name="Wincker P."/>
            <person name="Balesdent M.-H."/>
            <person name="Howlett B.J."/>
        </authorList>
    </citation>
    <scope>NUCLEOTIDE SEQUENCE [LARGE SCALE GENOMIC DNA]</scope>
    <source>
        <strain>JN3 / isolate v23.1.3 / race Av1-4-5-6-7-8</strain>
    </source>
</reference>
<gene>
    <name type="ORF">Lema_P114090.1</name>
</gene>
<organism>
    <name type="scientific">Leptosphaeria maculans (strain JN3 / isolate v23.1.3 / race Av1-4-5-6-7-8)</name>
    <name type="common">Blackleg fungus</name>
    <name type="synonym">Phoma lingam</name>
    <dbReference type="NCBI Taxonomy" id="985895"/>
    <lineage>
        <taxon>Eukaryota</taxon>
        <taxon>Fungi</taxon>
        <taxon>Dikarya</taxon>
        <taxon>Ascomycota</taxon>
        <taxon>Pezizomycotina</taxon>
        <taxon>Dothideomycetes</taxon>
        <taxon>Pleosporomycetidae</taxon>
        <taxon>Pleosporales</taxon>
        <taxon>Pleosporineae</taxon>
        <taxon>Leptosphaeriaceae</taxon>
        <taxon>Plenodomus</taxon>
        <taxon>Plenodomus lingam/Leptosphaeria maculans species complex</taxon>
    </lineage>
</organism>
<keyword id="KW-0125">Carotenoid biosynthesis</keyword>
<keyword id="KW-0413">Isomerase</keyword>
<keyword id="KW-0472">Membrane</keyword>
<keyword id="KW-0511">Multifunctional enzyme</keyword>
<keyword id="KW-1185">Reference proteome</keyword>
<keyword id="KW-0808">Transferase</keyword>
<keyword id="KW-0812">Transmembrane</keyword>
<keyword id="KW-1133">Transmembrane helix</keyword>
<feature type="chain" id="PRO_0000409237" description="Bifunctional lycopene cyclase/phytoene synthase">
    <location>
        <begin position="1"/>
        <end position="581"/>
    </location>
</feature>
<feature type="transmembrane region" description="Helical" evidence="2">
    <location>
        <begin position="3"/>
        <end position="23"/>
    </location>
</feature>
<feature type="transmembrane region" description="Helical" evidence="2">
    <location>
        <begin position="35"/>
        <end position="55"/>
    </location>
</feature>
<feature type="transmembrane region" description="Helical" evidence="2">
    <location>
        <begin position="65"/>
        <end position="85"/>
    </location>
</feature>
<feature type="transmembrane region" description="Helical" evidence="2">
    <location>
        <begin position="120"/>
        <end position="140"/>
    </location>
</feature>
<feature type="transmembrane region" description="Helical" evidence="2">
    <location>
        <begin position="152"/>
        <end position="172"/>
    </location>
</feature>
<feature type="transmembrane region" description="Helical" evidence="2">
    <location>
        <begin position="173"/>
        <end position="193"/>
    </location>
</feature>
<feature type="transmembrane region" description="Helical" evidence="2">
    <location>
        <begin position="221"/>
        <end position="241"/>
    </location>
</feature>
<feature type="region of interest" description="Lycopene beta-cyclase" evidence="1">
    <location>
        <begin position="1"/>
        <end position="243"/>
    </location>
</feature>
<feature type="region of interest" description="Phytoene synthase" evidence="1">
    <location>
        <begin position="250"/>
        <end position="581"/>
    </location>
</feature>
<name>LCPS_LEPMJ</name>